<comment type="function">
    <text evidence="1">Catalyzes the base-exchange of a guanine (G) residue with the queuine precursor 7-aminomethyl-7-deazaguanine (PreQ1) at position 34 (anticodon wobble position) in tRNAs with GU(N) anticodons (tRNA-Asp, -Asn, -His and -Tyr). Catalysis occurs through a double-displacement mechanism. The nucleophile active site attacks the C1' of nucleotide 34 to detach the guanine base from the RNA, forming a covalent enzyme-RNA intermediate. The proton acceptor active site deprotonates the incoming PreQ1, allowing a nucleophilic attack on the C1' of the ribose to form the product. After dissociation, two additional enzymatic reactions on the tRNA convert PreQ1 to queuine (Q), resulting in the hypermodified nucleoside queuosine (7-(((4,5-cis-dihydroxy-2-cyclopenten-1-yl)amino)methyl)-7-deazaguanosine).</text>
</comment>
<comment type="catalytic activity">
    <reaction evidence="1">
        <text>7-aminomethyl-7-carbaguanine + guanosine(34) in tRNA = 7-aminomethyl-7-carbaguanosine(34) in tRNA + guanine</text>
        <dbReference type="Rhea" id="RHEA:24104"/>
        <dbReference type="Rhea" id="RHEA-COMP:10341"/>
        <dbReference type="Rhea" id="RHEA-COMP:10342"/>
        <dbReference type="ChEBI" id="CHEBI:16235"/>
        <dbReference type="ChEBI" id="CHEBI:58703"/>
        <dbReference type="ChEBI" id="CHEBI:74269"/>
        <dbReference type="ChEBI" id="CHEBI:82833"/>
        <dbReference type="EC" id="2.4.2.29"/>
    </reaction>
</comment>
<comment type="cofactor">
    <cofactor evidence="1">
        <name>Zn(2+)</name>
        <dbReference type="ChEBI" id="CHEBI:29105"/>
    </cofactor>
    <text evidence="1">Binds 1 zinc ion per subunit.</text>
</comment>
<comment type="pathway">
    <text evidence="1">tRNA modification; tRNA-queuosine biosynthesis.</text>
</comment>
<comment type="subunit">
    <text evidence="1">Homodimer. Within each dimer, one monomer is responsible for RNA recognition and catalysis, while the other monomer binds to the replacement base PreQ1.</text>
</comment>
<comment type="similarity">
    <text evidence="1">Belongs to the queuine tRNA-ribosyltransferase family.</text>
</comment>
<feature type="chain" id="PRO_1000016804" description="Queuine tRNA-ribosyltransferase">
    <location>
        <begin position="1"/>
        <end position="375"/>
    </location>
</feature>
<feature type="region of interest" description="RNA binding" evidence="1">
    <location>
        <begin position="251"/>
        <end position="257"/>
    </location>
</feature>
<feature type="region of interest" description="RNA binding; important for wobble base 34 recognition" evidence="1">
    <location>
        <begin position="275"/>
        <end position="279"/>
    </location>
</feature>
<feature type="active site" description="Proton acceptor" evidence="1">
    <location>
        <position position="90"/>
    </location>
</feature>
<feature type="active site" description="Nucleophile" evidence="1">
    <location>
        <position position="270"/>
    </location>
</feature>
<feature type="binding site" evidence="1">
    <location>
        <begin position="90"/>
        <end position="94"/>
    </location>
    <ligand>
        <name>substrate</name>
    </ligand>
</feature>
<feature type="binding site" evidence="1">
    <location>
        <position position="144"/>
    </location>
    <ligand>
        <name>substrate</name>
    </ligand>
</feature>
<feature type="binding site" evidence="1">
    <location>
        <position position="193"/>
    </location>
    <ligand>
        <name>substrate</name>
    </ligand>
</feature>
<feature type="binding site" evidence="1">
    <location>
        <position position="220"/>
    </location>
    <ligand>
        <name>substrate</name>
    </ligand>
</feature>
<feature type="binding site" evidence="1">
    <location>
        <position position="308"/>
    </location>
    <ligand>
        <name>Zn(2+)</name>
        <dbReference type="ChEBI" id="CHEBI:29105"/>
    </ligand>
</feature>
<feature type="binding site" evidence="1">
    <location>
        <position position="310"/>
    </location>
    <ligand>
        <name>Zn(2+)</name>
        <dbReference type="ChEBI" id="CHEBI:29105"/>
    </ligand>
</feature>
<feature type="binding site" evidence="1">
    <location>
        <position position="313"/>
    </location>
    <ligand>
        <name>Zn(2+)</name>
        <dbReference type="ChEBI" id="CHEBI:29105"/>
    </ligand>
</feature>
<feature type="binding site" evidence="1">
    <location>
        <position position="339"/>
    </location>
    <ligand>
        <name>Zn(2+)</name>
        <dbReference type="ChEBI" id="CHEBI:29105"/>
    </ligand>
</feature>
<protein>
    <recommendedName>
        <fullName evidence="1">Queuine tRNA-ribosyltransferase</fullName>
        <ecNumber evidence="1">2.4.2.29</ecNumber>
    </recommendedName>
    <alternativeName>
        <fullName evidence="1">Guanine insertion enzyme</fullName>
    </alternativeName>
    <alternativeName>
        <fullName evidence="1">tRNA-guanine transglycosylase</fullName>
    </alternativeName>
</protein>
<sequence>MLNFKLLNTDGNARRGQLTVNHGVIETPIFMPVGTYGSVKAMSPLELKEIDAQIILGNTFHLWLRPGNDIVAKFGGLHEFMGWDKPILTDSGGFQVFSLGEMRKITEEGVHFSSPINGDKLFLSPEVSMQIQRVLNSDIVMQFDECTPYEIDGRPATADEAAKSMRMSLRWAKRSIDEFNREENPNALFGIVQGGMFEHLRDESLAGLEDINFHGVAIGGLSVGEPKEDMLRVLQHVGPRLPANKPHYLMGVGTPEDLVQGVANGIDMFDCVMPTRNARNGWLFTRFGDIKIKNARYKDDKKPLDASCGCYACRNFSRAYLHHLHRTGEILGARLNTIHNLHYYLDLMREMREAISEGRFQLFVKQFHADRARGA</sequence>
<organism>
    <name type="scientific">Herminiimonas arsenicoxydans</name>
    <dbReference type="NCBI Taxonomy" id="204773"/>
    <lineage>
        <taxon>Bacteria</taxon>
        <taxon>Pseudomonadati</taxon>
        <taxon>Pseudomonadota</taxon>
        <taxon>Betaproteobacteria</taxon>
        <taxon>Burkholderiales</taxon>
        <taxon>Oxalobacteraceae</taxon>
        <taxon>Herminiimonas</taxon>
    </lineage>
</organism>
<dbReference type="EC" id="2.4.2.29" evidence="1"/>
<dbReference type="EMBL" id="CU207211">
    <property type="protein sequence ID" value="CAL60530.1"/>
    <property type="molecule type" value="Genomic_DNA"/>
</dbReference>
<dbReference type="SMR" id="A4G1Z3"/>
<dbReference type="STRING" id="204773.HEAR0304"/>
<dbReference type="KEGG" id="har:HEAR0304"/>
<dbReference type="eggNOG" id="COG0343">
    <property type="taxonomic scope" value="Bacteria"/>
</dbReference>
<dbReference type="HOGENOM" id="CLU_022060_0_1_4"/>
<dbReference type="OrthoDB" id="9805417at2"/>
<dbReference type="UniPathway" id="UPA00392"/>
<dbReference type="Proteomes" id="UP000006697">
    <property type="component" value="Chromosome"/>
</dbReference>
<dbReference type="GO" id="GO:0005829">
    <property type="term" value="C:cytosol"/>
    <property type="evidence" value="ECO:0007669"/>
    <property type="project" value="TreeGrafter"/>
</dbReference>
<dbReference type="GO" id="GO:0046872">
    <property type="term" value="F:metal ion binding"/>
    <property type="evidence" value="ECO:0007669"/>
    <property type="project" value="UniProtKB-KW"/>
</dbReference>
<dbReference type="GO" id="GO:0008479">
    <property type="term" value="F:tRNA-guanosine(34) queuine transglycosylase activity"/>
    <property type="evidence" value="ECO:0007669"/>
    <property type="project" value="UniProtKB-UniRule"/>
</dbReference>
<dbReference type="GO" id="GO:0008616">
    <property type="term" value="P:queuosine biosynthetic process"/>
    <property type="evidence" value="ECO:0007669"/>
    <property type="project" value="UniProtKB-UniRule"/>
</dbReference>
<dbReference type="GO" id="GO:0002099">
    <property type="term" value="P:tRNA wobble guanine modification"/>
    <property type="evidence" value="ECO:0007669"/>
    <property type="project" value="TreeGrafter"/>
</dbReference>
<dbReference type="GO" id="GO:0101030">
    <property type="term" value="P:tRNA-guanine transglycosylation"/>
    <property type="evidence" value="ECO:0007669"/>
    <property type="project" value="InterPro"/>
</dbReference>
<dbReference type="FunFam" id="3.20.20.105:FF:000001">
    <property type="entry name" value="Queuine tRNA-ribosyltransferase"/>
    <property type="match status" value="1"/>
</dbReference>
<dbReference type="Gene3D" id="3.20.20.105">
    <property type="entry name" value="Queuine tRNA-ribosyltransferase-like"/>
    <property type="match status" value="1"/>
</dbReference>
<dbReference type="HAMAP" id="MF_00168">
    <property type="entry name" value="Q_tRNA_Tgt"/>
    <property type="match status" value="1"/>
</dbReference>
<dbReference type="InterPro" id="IPR050076">
    <property type="entry name" value="ArchSynthase1/Queuine_TRR"/>
</dbReference>
<dbReference type="InterPro" id="IPR004803">
    <property type="entry name" value="TGT"/>
</dbReference>
<dbReference type="InterPro" id="IPR036511">
    <property type="entry name" value="TGT-like_sf"/>
</dbReference>
<dbReference type="InterPro" id="IPR002616">
    <property type="entry name" value="tRNA_ribo_trans-like"/>
</dbReference>
<dbReference type="NCBIfam" id="TIGR00430">
    <property type="entry name" value="Q_tRNA_tgt"/>
    <property type="match status" value="1"/>
</dbReference>
<dbReference type="NCBIfam" id="TIGR00449">
    <property type="entry name" value="tgt_general"/>
    <property type="match status" value="1"/>
</dbReference>
<dbReference type="PANTHER" id="PTHR46499">
    <property type="entry name" value="QUEUINE TRNA-RIBOSYLTRANSFERASE"/>
    <property type="match status" value="1"/>
</dbReference>
<dbReference type="PANTHER" id="PTHR46499:SF1">
    <property type="entry name" value="QUEUINE TRNA-RIBOSYLTRANSFERASE"/>
    <property type="match status" value="1"/>
</dbReference>
<dbReference type="Pfam" id="PF01702">
    <property type="entry name" value="TGT"/>
    <property type="match status" value="1"/>
</dbReference>
<dbReference type="SUPFAM" id="SSF51713">
    <property type="entry name" value="tRNA-guanine transglycosylase"/>
    <property type="match status" value="1"/>
</dbReference>
<name>TGT_HERAR</name>
<gene>
    <name evidence="1" type="primary">tgt</name>
    <name type="ordered locus">HEAR0304</name>
</gene>
<accession>A4G1Z3</accession>
<proteinExistence type="inferred from homology"/>
<evidence type="ECO:0000255" key="1">
    <source>
        <dbReference type="HAMAP-Rule" id="MF_00168"/>
    </source>
</evidence>
<keyword id="KW-0328">Glycosyltransferase</keyword>
<keyword id="KW-0479">Metal-binding</keyword>
<keyword id="KW-0671">Queuosine biosynthesis</keyword>
<keyword id="KW-1185">Reference proteome</keyword>
<keyword id="KW-0808">Transferase</keyword>
<keyword id="KW-0819">tRNA processing</keyword>
<keyword id="KW-0862">Zinc</keyword>
<reference key="1">
    <citation type="journal article" date="2007" name="PLoS Genet.">
        <title>A tale of two oxidation states: bacterial colonization of arsenic-rich environments.</title>
        <authorList>
            <person name="Muller D."/>
            <person name="Medigue C."/>
            <person name="Koechler S."/>
            <person name="Barbe V."/>
            <person name="Barakat M."/>
            <person name="Talla E."/>
            <person name="Bonnefoy V."/>
            <person name="Krin E."/>
            <person name="Arsene-Ploetze F."/>
            <person name="Carapito C."/>
            <person name="Chandler M."/>
            <person name="Cournoyer B."/>
            <person name="Cruveiller S."/>
            <person name="Dossat C."/>
            <person name="Duval S."/>
            <person name="Heymann M."/>
            <person name="Leize E."/>
            <person name="Lieutaud A."/>
            <person name="Lievremont D."/>
            <person name="Makita Y."/>
            <person name="Mangenot S."/>
            <person name="Nitschke W."/>
            <person name="Ortet P."/>
            <person name="Perdrial N."/>
            <person name="Schoepp B."/>
            <person name="Siguier P."/>
            <person name="Simeonova D.D."/>
            <person name="Rouy Z."/>
            <person name="Segurens B."/>
            <person name="Turlin E."/>
            <person name="Vallenet D."/>
            <person name="van Dorsselaer A."/>
            <person name="Weiss S."/>
            <person name="Weissenbach J."/>
            <person name="Lett M.-C."/>
            <person name="Danchin A."/>
            <person name="Bertin P.N."/>
        </authorList>
    </citation>
    <scope>NUCLEOTIDE SEQUENCE [LARGE SCALE GENOMIC DNA]</scope>
    <source>
        <strain>ULPAs1</strain>
    </source>
</reference>